<keyword id="KW-0325">Glycoprotein</keyword>
<keyword id="KW-0349">Heme</keyword>
<keyword id="KW-0408">Iron</keyword>
<keyword id="KW-0472">Membrane</keyword>
<keyword id="KW-0479">Metal-binding</keyword>
<keyword id="KW-0503">Monooxygenase</keyword>
<keyword id="KW-0560">Oxidoreductase</keyword>
<keyword id="KW-1185">Reference proteome</keyword>
<keyword id="KW-0812">Transmembrane</keyword>
<keyword id="KW-1133">Transmembrane helix</keyword>
<organism>
    <name type="scientific">Dothistroma septosporum (strain NZE10 / CBS 128990)</name>
    <name type="common">Red band needle blight fungus</name>
    <name type="synonym">Mycosphaerella pini</name>
    <dbReference type="NCBI Taxonomy" id="675120"/>
    <lineage>
        <taxon>Eukaryota</taxon>
        <taxon>Fungi</taxon>
        <taxon>Dikarya</taxon>
        <taxon>Ascomycota</taxon>
        <taxon>Pezizomycotina</taxon>
        <taxon>Dothideomycetes</taxon>
        <taxon>Dothideomycetidae</taxon>
        <taxon>Mycosphaerellales</taxon>
        <taxon>Mycosphaerellaceae</taxon>
        <taxon>Dothistroma</taxon>
    </lineage>
</organism>
<name>CYPX_DOTSN</name>
<feature type="chain" id="PRO_0000443460" description="Cytochrome P450 monooxygenase cypX">
    <location>
        <begin position="1"/>
        <end position="511"/>
    </location>
</feature>
<feature type="transmembrane region" description="Helical" evidence="3">
    <location>
        <begin position="18"/>
        <end position="38"/>
    </location>
</feature>
<feature type="binding site" description="axial binding residue" evidence="1">
    <location>
        <position position="454"/>
    </location>
    <ligand>
        <name>heme</name>
        <dbReference type="ChEBI" id="CHEBI:30413"/>
    </ligand>
    <ligandPart>
        <name>Fe</name>
        <dbReference type="ChEBI" id="CHEBI:18248"/>
    </ligandPart>
</feature>
<feature type="glycosylation site" description="N-linked (GlcNAc...) asparagine" evidence="4">
    <location>
        <position position="162"/>
    </location>
</feature>
<feature type="glycosylation site" description="N-linked (GlcNAc...) asparagine" evidence="4">
    <location>
        <position position="407"/>
    </location>
</feature>
<protein>
    <recommendedName>
        <fullName evidence="11">Cytochrome P450 monooxygenase cypX</fullName>
        <ecNumber evidence="14">1.-.-.-</ecNumber>
    </recommendedName>
    <alternativeName>
        <fullName evidence="11">Dothistromin biosynthesis protein cypX</fullName>
    </alternativeName>
</protein>
<accession>M2YIZ5</accession>
<sequence length="511" mass="56700">MAGELYKWIMDATAGAPLPFSLALVAAAFVLYNIVSIITTAYFSPLSKIPGPWYAKLTDLRLTYSVFAGNRIYYVDSLHQKYGPMVRIGPKEVDVADPAAAREVHRMGTVFTKAPFYRLLSPGPVDNIFNFRDQKKHSQRRKLYAKGFTLVELRKNWESTINKTISMAVQKMKEEAANGDTELMGWWTLMANEIVCRLTFNGGHGTVEKGIKDPFVLMLEKRKGDLAHLLKMFIPPLYYVGRVLGKVNTRMNDIFYSQEKMFKAGAGVVKSARQDKEAGEFNQNLFAKALQEGEGDAATLTDTDIITDAGALLLAGSDPTAISLTFLIYLVLSRPELQKQLEEEVASIDGEVTDTVCEGLPLMNAIIDESMRLYGAAPGGLPRSPPAGGANLGGYYIPEGTVVDTQNWTLHTDGATWKEAQTFDHTRFLPENRLEFSEKQKMAFNPFGQGSRQCLGIHLGRLEMRLAVAHFFRELRGVKLAKSATPESMAVVDSFVAGVPRDRRCEVTMKA</sequence>
<reference key="1">
    <citation type="journal article" date="2012" name="PLoS Genet.">
        <title>The genomes of the fungal plant pathogens Cladosporium fulvum and Dothistroma septosporum reveal adaptation to different hosts and lifestyles but also signatures of common ancestry.</title>
        <authorList>
            <person name="de Wit P.J.G.M."/>
            <person name="van der Burgt A."/>
            <person name="Oekmen B."/>
            <person name="Stergiopoulos I."/>
            <person name="Abd-Elsalam K.A."/>
            <person name="Aerts A.L."/>
            <person name="Bahkali A.H."/>
            <person name="Beenen H.G."/>
            <person name="Chettri P."/>
            <person name="Cox M.P."/>
            <person name="Datema E."/>
            <person name="de Vries R.P."/>
            <person name="Dhillon B."/>
            <person name="Ganley A.R."/>
            <person name="Griffiths S.A."/>
            <person name="Guo Y."/>
            <person name="Hamelin R.C."/>
            <person name="Henrissat B."/>
            <person name="Kabir M.S."/>
            <person name="Jashni M.K."/>
            <person name="Kema G."/>
            <person name="Klaubauf S."/>
            <person name="Lapidus A."/>
            <person name="Levasseur A."/>
            <person name="Lindquist E."/>
            <person name="Mehrabi R."/>
            <person name="Ohm R.A."/>
            <person name="Owen T.J."/>
            <person name="Salamov A."/>
            <person name="Schwelm A."/>
            <person name="Schijlen E."/>
            <person name="Sun H."/>
            <person name="van den Burg H.A."/>
            <person name="van Ham R.C.H.J."/>
            <person name="Zhang S."/>
            <person name="Goodwin S.B."/>
            <person name="Grigoriev I.V."/>
            <person name="Collemare J."/>
            <person name="Bradshaw R.E."/>
        </authorList>
    </citation>
    <scope>NUCLEOTIDE SEQUENCE [LARGE SCALE GENOMIC DNA]</scope>
    <source>
        <strain>NZE10 / CBS 128990</strain>
    </source>
</reference>
<reference key="2">
    <citation type="journal article" date="2012" name="PLoS Pathog.">
        <title>Diverse lifestyles and strategies of plant pathogenesis encoded in the genomes of eighteen Dothideomycetes fungi.</title>
        <authorList>
            <person name="Ohm R.A."/>
            <person name="Feau N."/>
            <person name="Henrissat B."/>
            <person name="Schoch C.L."/>
            <person name="Horwitz B.A."/>
            <person name="Barry K.W."/>
            <person name="Condon B.J."/>
            <person name="Copeland A.C."/>
            <person name="Dhillon B."/>
            <person name="Glaser F."/>
            <person name="Hesse C.N."/>
            <person name="Kosti I."/>
            <person name="LaButti K."/>
            <person name="Lindquist E.A."/>
            <person name="Lucas S."/>
            <person name="Salamov A.A."/>
            <person name="Bradshaw R.E."/>
            <person name="Ciuffetti L."/>
            <person name="Hamelin R.C."/>
            <person name="Kema G.H.J."/>
            <person name="Lawrence C."/>
            <person name="Scott J.A."/>
            <person name="Spatafora J.W."/>
            <person name="Turgeon B.G."/>
            <person name="de Wit P.J.G.M."/>
            <person name="Zhong S."/>
            <person name="Goodwin S.B."/>
            <person name="Grigoriev I.V."/>
        </authorList>
    </citation>
    <scope>NUCLEOTIDE SEQUENCE [LARGE SCALE GENOMIC DNA]</scope>
    <source>
        <strain>NZE10 / CBS 128990</strain>
    </source>
</reference>
<reference key="3">
    <citation type="journal article" date="2002" name="Appl. Environ. Microbiol.">
        <title>Dothistroma pini, a forest pathogen, contains homologs of aflatoxin biosynthetic pathway genes.</title>
        <authorList>
            <person name="Bradshaw R.E."/>
            <person name="Bhatnagar D."/>
            <person name="Ganley R.J."/>
            <person name="Gillman C.J."/>
            <person name="Monahan B.J."/>
            <person name="Seconi J.M."/>
        </authorList>
    </citation>
    <scope>FUNCTION</scope>
</reference>
<reference key="4">
    <citation type="journal article" date="2006" name="Mycopathologia">
        <title>A polyketide synthase gene required for biosynthesis of the aflatoxin-like toxin, dothistromin.</title>
        <authorList>
            <person name="Bradshaw R.E."/>
            <person name="Jin H."/>
            <person name="Morgan B.S."/>
            <person name="Schwelm A."/>
            <person name="Teddy O.R."/>
            <person name="Young C.A."/>
            <person name="Zhang S."/>
        </authorList>
    </citation>
    <scope>FUNCTION</scope>
</reference>
<reference key="5">
    <citation type="journal article" date="2007" name="Fungal Genet. Biol.">
        <title>A fragmented aflatoxin-like gene cluster in the forest pathogen Dothistroma septosporum.</title>
        <authorList>
            <person name="Zhang S."/>
            <person name="Schwelm A."/>
            <person name="Jin H."/>
            <person name="Collins L.J."/>
            <person name="Bradshaw R.E."/>
        </authorList>
    </citation>
    <scope>FUNCTION</scope>
    <scope>INDUCTION</scope>
</reference>
<reference key="6">
    <citation type="journal article" date="2010" name="Toxins">
        <title>Genetics of dothistromin biosynthesis of Dothistroma septosporum: an update.</title>
        <authorList>
            <person name="Schwelm A."/>
            <person name="Bradshaw R.E."/>
        </authorList>
    </citation>
    <scope>REVIEW ON FUNCTION</scope>
    <scope>PATHWAY</scope>
</reference>
<reference key="7">
    <citation type="journal article" date="2013" name="Fungal Genet. Biol.">
        <title>Dothistromin genes at multiple separate loci are regulated by AflR.</title>
        <authorList>
            <person name="Chettri P."/>
            <person name="Ehrlich K.C."/>
            <person name="Cary J.W."/>
            <person name="Collemare J."/>
            <person name="Cox M.P."/>
            <person name="Griffiths S.A."/>
            <person name="Olson M.A."/>
            <person name="de Wit P.J."/>
            <person name="Bradshaw R.E."/>
        </authorList>
    </citation>
    <scope>FUNCTION</scope>
    <scope>INDUCTION</scope>
    <scope>PATHWAY</scope>
</reference>
<reference key="8">
    <citation type="journal article" date="2013" name="New Phytol.">
        <title>Fragmentation of an aflatoxin-like gene cluster in a forest pathogen.</title>
        <authorList>
            <person name="Bradshaw R.E."/>
            <person name="Slot J.C."/>
            <person name="Moore G.G."/>
            <person name="Chettri P."/>
            <person name="de Wit P.J."/>
            <person name="Ehrlich K.C."/>
            <person name="Ganley A.R."/>
            <person name="Olson M.A."/>
            <person name="Rokas A."/>
            <person name="Carbone I."/>
            <person name="Cox M.P."/>
        </authorList>
    </citation>
    <scope>FUNCTION</scope>
</reference>
<evidence type="ECO:0000250" key="1">
    <source>
        <dbReference type="UniProtKB" id="P04798"/>
    </source>
</evidence>
<evidence type="ECO:0000250" key="2">
    <source>
        <dbReference type="UniProtKB" id="Q6UEF4"/>
    </source>
</evidence>
<evidence type="ECO:0000255" key="3"/>
<evidence type="ECO:0000255" key="4">
    <source>
        <dbReference type="PROSITE-ProRule" id="PRU00498"/>
    </source>
</evidence>
<evidence type="ECO:0000269" key="5">
    <source>
    </source>
</evidence>
<evidence type="ECO:0000269" key="6">
    <source>
    </source>
</evidence>
<evidence type="ECO:0000269" key="7">
    <source>
    </source>
</evidence>
<evidence type="ECO:0000269" key="8">
    <source>
    </source>
</evidence>
<evidence type="ECO:0000303" key="9">
    <source>
    </source>
</evidence>
<evidence type="ECO:0000303" key="10">
    <source>
    </source>
</evidence>
<evidence type="ECO:0000303" key="11">
    <source>
    </source>
</evidence>
<evidence type="ECO:0000305" key="12"/>
<evidence type="ECO:0000305" key="13">
    <source>
    </source>
</evidence>
<evidence type="ECO:0000305" key="14">
    <source>
    </source>
</evidence>
<evidence type="ECO:0000305" key="15">
    <source>
    </source>
</evidence>
<gene>
    <name evidence="11" type="primary">cypX</name>
    <name evidence="9" type="synonym">cypA</name>
    <name type="ORF">DOTSEDRAFT_139960</name>
</gene>
<comment type="function">
    <text evidence="2 5 6 10 13 14 15">Cytochrome P450 monooxygenase; part of the fragmented gene cluster that mediates the biosynthesis of dothistromin (DOTH), a polyketide toxin very similar in structure to the aflatoxin precursor, versicolorin B (PubMed:12039746, PubMed:17683963, PubMed:22069571, PubMed:23207690, PubMed:23448391). The first step of the pathway is the conversion of acetate to norsolorinic acid (NOR) and requires the fatty acid synthase subunits hexA and hexB, as well as the polyketide synthase pksA (PubMed:16649078, PubMed:23207690). PksA combines a hexanoyl starter unit and 7 malonyl-CoA extender units to synthesize the precursor NOR (By similarity). The hexanoyl starter unit is provided to the acyl-carrier protein (ACP) domain by the fungal fatty acid synthase hexA/hexB (By similarity). The second step is the conversion of NOR to averantin (AVN) and requires the norsolorinic acid ketoreductase nor1, which catalyzes the dehydration of norsolorinic acid to form (1'S)-averantin (PubMed:23207690). The cytochrome P450 monooxygenase avnA then catalyzes the hydroxylation of AVN to 5'hydroxyaverantin (HAVN) (PubMed:23207690). The next step is performed by adhA that transforms HAVN to averufin (AVF) (PubMed:23207690). Averufin might then be converted to hydroxyversicolorone by cypX and avfA (PubMed:23207690). Hydroxyversicolorone is further converted versiconal hemiacetal acetate (VHA) by moxY (PubMed:23207690). VHA is then the substrate for the versiconal hemiacetal acetate esterase est1 to yield versiconal (VAL) (PubMed:23207690). Versicolorin B synthase vbsA then converts VAL to versicolorin B (VERB) by closing the bisfuran ring (PubMed:16649078, PubMed:23207690). Then, the activity of the versicolorin B desaturase verB leads to versicolorin A (VERA) (PubMed:23207690). DotB, a predicted chloroperoxidase, may perform epoxidation of the A-ring of VERA (PubMed:23207690). Alternatively, a cytochrome P450, such as cypX or avnA could catalyze this step (PubMed:23207690). It is also possible that another, uncharacterized, cytochrome P450 enzyme is responsible for this step (PubMed:23207690). Opening of the epoxide could potentially be achieved by the epoxide hydrolase epoA (PubMed:23207690). However, epoA seems not to be required for DOTH biosynthesis, but other epoxide hydrolases may have the ability to complement this hydrolysis (PubMed:23207690). Alternatively, opening of the epoxide ring could be achieved non-enzymatically (PubMed:23207690). The next step is the deoxygenation of ring A to yield the 5,8-dihydroxyanthraquinone which is most likely catalyzed by the NADPH dehydrogenase encoded by ver1 (PubMed:23207690). The last stages of DOTH biosynthesis are proposed to involve hydroxylation of the bisfuran (PubMed:23207690). OrdB and norB might have oxidative roles here (PubMed:23207690). An alternative possibility is that cytochrome P450 monoogenases such as avnA and cypX might perform these steps in addition to previously proposed steps (PubMed:23207690).</text>
</comment>
<comment type="cofactor">
    <cofactor evidence="1">
        <name>heme</name>
        <dbReference type="ChEBI" id="CHEBI:30413"/>
    </cofactor>
</comment>
<comment type="pathway">
    <text evidence="10 14">Mycotoxin biosynthesis.</text>
</comment>
<comment type="subcellular location">
    <subcellularLocation>
        <location evidence="3">Membrane</location>
        <topology evidence="3">Single-pass membrane protein</topology>
    </subcellularLocation>
</comment>
<comment type="induction">
    <text evidence="7 8">Expression is positively regulated by the dothistromin-specific transcription factor aflR (PubMed:23207690). Dothistromin biosynthetic proteins are co-regulated, showing a high level of expression at ealy exponential phase with a subsequent decline in older cultures (PubMed:17683963).</text>
</comment>
<comment type="similarity">
    <text evidence="12">Belongs to the cytochrome P450 family.</text>
</comment>
<proteinExistence type="evidence at transcript level"/>
<dbReference type="EC" id="1.-.-.-" evidence="14"/>
<dbReference type="EMBL" id="KB446546">
    <property type="protein sequence ID" value="EME38861.1"/>
    <property type="molecule type" value="Genomic_DNA"/>
</dbReference>
<dbReference type="SMR" id="M2YIZ5"/>
<dbReference type="STRING" id="675120.M2YIZ5"/>
<dbReference type="GlyCosmos" id="M2YIZ5">
    <property type="glycosylation" value="2 sites, No reported glycans"/>
</dbReference>
<dbReference type="EnsemblFungi" id="EME38861">
    <property type="protein sequence ID" value="EME38861"/>
    <property type="gene ID" value="DOTSEDRAFT_139960"/>
</dbReference>
<dbReference type="eggNOG" id="KOG0157">
    <property type="taxonomic scope" value="Eukaryota"/>
</dbReference>
<dbReference type="HOGENOM" id="CLU_001570_14_2_1"/>
<dbReference type="OMA" id="WTLMANE"/>
<dbReference type="OrthoDB" id="1470350at2759"/>
<dbReference type="Proteomes" id="UP000016933">
    <property type="component" value="Unassembled WGS sequence"/>
</dbReference>
<dbReference type="GO" id="GO:0016020">
    <property type="term" value="C:membrane"/>
    <property type="evidence" value="ECO:0007669"/>
    <property type="project" value="UniProtKB-SubCell"/>
</dbReference>
<dbReference type="GO" id="GO:0020037">
    <property type="term" value="F:heme binding"/>
    <property type="evidence" value="ECO:0007669"/>
    <property type="project" value="InterPro"/>
</dbReference>
<dbReference type="GO" id="GO:0005506">
    <property type="term" value="F:iron ion binding"/>
    <property type="evidence" value="ECO:0007669"/>
    <property type="project" value="InterPro"/>
</dbReference>
<dbReference type="GO" id="GO:0004497">
    <property type="term" value="F:monooxygenase activity"/>
    <property type="evidence" value="ECO:0007669"/>
    <property type="project" value="UniProtKB-KW"/>
</dbReference>
<dbReference type="GO" id="GO:0016705">
    <property type="term" value="F:oxidoreductase activity, acting on paired donors, with incorporation or reduction of molecular oxygen"/>
    <property type="evidence" value="ECO:0007669"/>
    <property type="project" value="InterPro"/>
</dbReference>
<dbReference type="CDD" id="cd11059">
    <property type="entry name" value="CYP_fungal"/>
    <property type="match status" value="1"/>
</dbReference>
<dbReference type="Gene3D" id="1.10.630.10">
    <property type="entry name" value="Cytochrome P450"/>
    <property type="match status" value="1"/>
</dbReference>
<dbReference type="InterPro" id="IPR001128">
    <property type="entry name" value="Cyt_P450"/>
</dbReference>
<dbReference type="InterPro" id="IPR017972">
    <property type="entry name" value="Cyt_P450_CS"/>
</dbReference>
<dbReference type="InterPro" id="IPR002401">
    <property type="entry name" value="Cyt_P450_E_grp-I"/>
</dbReference>
<dbReference type="InterPro" id="IPR036396">
    <property type="entry name" value="Cyt_P450_sf"/>
</dbReference>
<dbReference type="InterPro" id="IPR050121">
    <property type="entry name" value="Cytochrome_P450_monoxygenase"/>
</dbReference>
<dbReference type="PANTHER" id="PTHR24305">
    <property type="entry name" value="CYTOCHROME P450"/>
    <property type="match status" value="1"/>
</dbReference>
<dbReference type="PANTHER" id="PTHR24305:SF96">
    <property type="entry name" value="CYTOCHROME P450 MONOOXYGENASE STCB-RELATED"/>
    <property type="match status" value="1"/>
</dbReference>
<dbReference type="Pfam" id="PF00067">
    <property type="entry name" value="p450"/>
    <property type="match status" value="1"/>
</dbReference>
<dbReference type="PRINTS" id="PR00463">
    <property type="entry name" value="EP450I"/>
</dbReference>
<dbReference type="PRINTS" id="PR00385">
    <property type="entry name" value="P450"/>
</dbReference>
<dbReference type="SUPFAM" id="SSF48264">
    <property type="entry name" value="Cytochrome P450"/>
    <property type="match status" value="1"/>
</dbReference>
<dbReference type="PROSITE" id="PS00086">
    <property type="entry name" value="CYTOCHROME_P450"/>
    <property type="match status" value="1"/>
</dbReference>